<protein>
    <recommendedName>
        <fullName>Homeobox protein Hox-D12a</fullName>
    </recommendedName>
</protein>
<feature type="chain" id="PRO_0000266002" description="Homeobox protein Hox-D12a">
    <location>
        <begin position="1"/>
        <end position="261"/>
    </location>
</feature>
<feature type="DNA-binding region" description="Homeobox" evidence="2">
    <location>
        <begin position="193"/>
        <end position="252"/>
    </location>
</feature>
<feature type="region of interest" description="Disordered" evidence="3">
    <location>
        <begin position="106"/>
        <end position="158"/>
    </location>
</feature>
<feature type="compositionally biased region" description="Basic and acidic residues" evidence="3">
    <location>
        <begin position="112"/>
        <end position="122"/>
    </location>
</feature>
<comment type="function">
    <text evidence="1">Sequence-specific transcription factor which is part of a developmental regulatory system that provides cells with specific positional identities on the anterior-posterior axis.</text>
</comment>
<comment type="subcellular location">
    <subcellularLocation>
        <location evidence="2">Nucleus</location>
    </subcellularLocation>
</comment>
<comment type="similarity">
    <text evidence="4">Belongs to the Abd-B homeobox family.</text>
</comment>
<evidence type="ECO:0000250" key="1"/>
<evidence type="ECO:0000255" key="2">
    <source>
        <dbReference type="PROSITE-ProRule" id="PRU00108"/>
    </source>
</evidence>
<evidence type="ECO:0000256" key="3">
    <source>
        <dbReference type="SAM" id="MobiDB-lite"/>
    </source>
</evidence>
<evidence type="ECO:0000305" key="4"/>
<organism>
    <name type="scientific">Takifugu rubripes</name>
    <name type="common">Japanese pufferfish</name>
    <name type="synonym">Fugu rubripes</name>
    <dbReference type="NCBI Taxonomy" id="31033"/>
    <lineage>
        <taxon>Eukaryota</taxon>
        <taxon>Metazoa</taxon>
        <taxon>Chordata</taxon>
        <taxon>Craniata</taxon>
        <taxon>Vertebrata</taxon>
        <taxon>Euteleostomi</taxon>
        <taxon>Actinopterygii</taxon>
        <taxon>Neopterygii</taxon>
        <taxon>Teleostei</taxon>
        <taxon>Neoteleostei</taxon>
        <taxon>Acanthomorphata</taxon>
        <taxon>Eupercaria</taxon>
        <taxon>Tetraodontiformes</taxon>
        <taxon>Tetradontoidea</taxon>
        <taxon>Tetraodontidae</taxon>
        <taxon>Takifugu</taxon>
    </lineage>
</organism>
<name>HXDCA_TAKRU</name>
<proteinExistence type="inferred from homology"/>
<gene>
    <name type="primary">hoxd12a</name>
</gene>
<reference key="1">
    <citation type="journal article" date="2006" name="Proc. Natl. Acad. Sci. U.S.A.">
        <title>Highly conserved syntenic blocks at the vertebrate Hox loci and conserved regulatory elements within and outside Hox gene clusters.</title>
        <authorList>
            <person name="Lee A.P."/>
            <person name="Koh E.G.L."/>
            <person name="Tay A."/>
            <person name="Brenner S."/>
            <person name="Venkatesh B."/>
        </authorList>
    </citation>
    <scope>NUCLEOTIDE SEQUENCE [GENOMIC DNA]</scope>
</reference>
<dbReference type="EMBL" id="DQ481668">
    <property type="protein sequence ID" value="ABF22462.1"/>
    <property type="molecule type" value="Genomic_DNA"/>
</dbReference>
<dbReference type="SMR" id="Q1KKT2"/>
<dbReference type="FunCoup" id="Q1KKT2">
    <property type="interactions" value="146"/>
</dbReference>
<dbReference type="STRING" id="31033.ENSTRUP00000044945"/>
<dbReference type="eggNOG" id="KOG0487">
    <property type="taxonomic scope" value="Eukaryota"/>
</dbReference>
<dbReference type="InParanoid" id="Q1KKT2"/>
<dbReference type="Proteomes" id="UP000005226">
    <property type="component" value="Unplaced"/>
</dbReference>
<dbReference type="GO" id="GO:0005634">
    <property type="term" value="C:nucleus"/>
    <property type="evidence" value="ECO:0007669"/>
    <property type="project" value="UniProtKB-SubCell"/>
</dbReference>
<dbReference type="GO" id="GO:0000981">
    <property type="term" value="F:DNA-binding transcription factor activity, RNA polymerase II-specific"/>
    <property type="evidence" value="ECO:0007669"/>
    <property type="project" value="InterPro"/>
</dbReference>
<dbReference type="GO" id="GO:1990837">
    <property type="term" value="F:sequence-specific double-stranded DNA binding"/>
    <property type="evidence" value="ECO:0007669"/>
    <property type="project" value="TreeGrafter"/>
</dbReference>
<dbReference type="CDD" id="cd00086">
    <property type="entry name" value="homeodomain"/>
    <property type="match status" value="1"/>
</dbReference>
<dbReference type="Gene3D" id="1.10.10.60">
    <property type="entry name" value="Homeodomain-like"/>
    <property type="match status" value="1"/>
</dbReference>
<dbReference type="InterPro" id="IPR001356">
    <property type="entry name" value="HD"/>
</dbReference>
<dbReference type="InterPro" id="IPR020479">
    <property type="entry name" value="HD_metazoa"/>
</dbReference>
<dbReference type="InterPro" id="IPR017970">
    <property type="entry name" value="Homeobox_CS"/>
</dbReference>
<dbReference type="InterPro" id="IPR009057">
    <property type="entry name" value="Homeodomain-like_sf"/>
</dbReference>
<dbReference type="PANTHER" id="PTHR46440:SF1">
    <property type="entry name" value="HOMEOBOX PROTEIN HOX-D12"/>
    <property type="match status" value="1"/>
</dbReference>
<dbReference type="PANTHER" id="PTHR46440">
    <property type="entry name" value="HOMEOBOX PROTEIN HOX-D12-RELATED"/>
    <property type="match status" value="1"/>
</dbReference>
<dbReference type="Pfam" id="PF00046">
    <property type="entry name" value="Homeodomain"/>
    <property type="match status" value="1"/>
</dbReference>
<dbReference type="PRINTS" id="PR00024">
    <property type="entry name" value="HOMEOBOX"/>
</dbReference>
<dbReference type="SMART" id="SM00389">
    <property type="entry name" value="HOX"/>
    <property type="match status" value="1"/>
</dbReference>
<dbReference type="SUPFAM" id="SSF46689">
    <property type="entry name" value="Homeodomain-like"/>
    <property type="match status" value="1"/>
</dbReference>
<dbReference type="PROSITE" id="PS00027">
    <property type="entry name" value="HOMEOBOX_1"/>
    <property type="match status" value="1"/>
</dbReference>
<dbReference type="PROSITE" id="PS50071">
    <property type="entry name" value="HOMEOBOX_2"/>
    <property type="match status" value="1"/>
</dbReference>
<accession>Q1KKT2</accession>
<sequence length="261" mass="29151">MCERTPLNPGHVGSLLNFAPPDSLYFSNLRGNGSHIPGLHQLPYNRRDVCTLPWTSTSNSCTPGPPAPPQTRAFGGYCPPFFPNSGFLNSSSSGGHVKTHLEESRCFPGTNHKTEEAGRQDEVYAGEHGGAGDRGYSDVDRSHGSAAQLDPDSALHVNGTKLDQNPIHGSSSQTCNRSTLAEGAPWCCSQVKTRKKRKPYSKPQLAELENEFLMNEFINRQKRKELSDRLDLSDQQVKIWFQNRRMKKKRLMMREQAFSVY</sequence>
<keyword id="KW-0217">Developmental protein</keyword>
<keyword id="KW-0238">DNA-binding</keyword>
<keyword id="KW-0371">Homeobox</keyword>
<keyword id="KW-0539">Nucleus</keyword>
<keyword id="KW-1185">Reference proteome</keyword>
<keyword id="KW-0804">Transcription</keyword>
<keyword id="KW-0805">Transcription regulation</keyword>